<gene>
    <name evidence="18" type="primary">araC</name>
    <name type="ordered locus">b0064</name>
    <name type="ordered locus">JW0063</name>
</gene>
<reference key="1">
    <citation type="journal article" date="1980" name="Gene">
        <title>The araC gene of Escherichia coli: transcriptional and translational start-points and complete nucleotide sequence.</title>
        <authorList>
            <person name="Wallace R.G."/>
            <person name="Lee N."/>
            <person name="Fowler A.V."/>
        </authorList>
    </citation>
    <scope>NUCLEOTIDE SEQUENCE [GENOMIC DNA]</scope>
    <source>
        <strain>B/R</strain>
    </source>
</reference>
<reference key="2">
    <citation type="journal article" date="1980" name="Nucleic Acids Res.">
        <title>DNA sequence of the araC regulatory gene from Escherichia coli B/r.</title>
        <authorList>
            <person name="Miyada C.G."/>
            <person name="Horwitz A.H."/>
            <person name="Cass L.G."/>
            <person name="Timko J."/>
            <person name="Wilcox G."/>
        </authorList>
    </citation>
    <scope>NUCLEOTIDE SEQUENCE [GENOMIC DNA]</scope>
    <source>
        <strain>B/R</strain>
    </source>
</reference>
<reference key="3">
    <citation type="journal article" date="1982" name="J. Mol. Biol.">
        <title>Is the amino acid but not the nucleotide sequence of the Escherichia coli araC gene conserved?</title>
        <authorList>
            <person name="Stoner C.M."/>
            <person name="Schleif R."/>
        </authorList>
    </citation>
    <scope>NUCLEOTIDE SEQUENCE [GENOMIC DNA]</scope>
    <source>
        <strain>K12</strain>
    </source>
</reference>
<reference key="4">
    <citation type="journal article" date="1992" name="Nucleic Acids Res.">
        <title>Systematic sequencing of the Escherichia coli genome: analysis of the 0-2.4 min region.</title>
        <authorList>
            <person name="Yura T."/>
            <person name="Mori H."/>
            <person name="Nagai H."/>
            <person name="Nagata T."/>
            <person name="Ishihama A."/>
            <person name="Fujita N."/>
            <person name="Isono K."/>
            <person name="Mizobuchi K."/>
            <person name="Nakata A."/>
        </authorList>
    </citation>
    <scope>NUCLEOTIDE SEQUENCE [LARGE SCALE GENOMIC DNA]</scope>
    <source>
        <strain>K12</strain>
    </source>
</reference>
<reference key="5">
    <citation type="journal article" date="1997" name="Science">
        <title>The complete genome sequence of Escherichia coli K-12.</title>
        <authorList>
            <person name="Blattner F.R."/>
            <person name="Plunkett G. III"/>
            <person name="Bloch C.A."/>
            <person name="Perna N.T."/>
            <person name="Burland V."/>
            <person name="Riley M."/>
            <person name="Collado-Vides J."/>
            <person name="Glasner J.D."/>
            <person name="Rode C.K."/>
            <person name="Mayhew G.F."/>
            <person name="Gregor J."/>
            <person name="Davis N.W."/>
            <person name="Kirkpatrick H.A."/>
            <person name="Goeden M.A."/>
            <person name="Rose D.J."/>
            <person name="Mau B."/>
            <person name="Shao Y."/>
        </authorList>
    </citation>
    <scope>NUCLEOTIDE SEQUENCE [LARGE SCALE GENOMIC DNA]</scope>
    <source>
        <strain>K12 / MG1655 / ATCC 47076</strain>
    </source>
</reference>
<reference key="6">
    <citation type="journal article" date="2006" name="Mol. Syst. Biol.">
        <title>Highly accurate genome sequences of Escherichia coli K-12 strains MG1655 and W3110.</title>
        <authorList>
            <person name="Hayashi K."/>
            <person name="Morooka N."/>
            <person name="Yamamoto Y."/>
            <person name="Fujita K."/>
            <person name="Isono K."/>
            <person name="Choi S."/>
            <person name="Ohtsubo E."/>
            <person name="Baba T."/>
            <person name="Wanner B.L."/>
            <person name="Mori H."/>
            <person name="Horiuchi T."/>
        </authorList>
    </citation>
    <scope>NUCLEOTIDE SEQUENCE [LARGE SCALE GENOMIC DNA]</scope>
    <source>
        <strain>K12 / W3110 / ATCC 27325 / DSM 5911</strain>
    </source>
</reference>
<reference key="7">
    <citation type="journal article" date="1980" name="Mol. Gen. Genet.">
        <title>The araC regulatory gene mRNA contains a leader sequence.</title>
        <authorList>
            <person name="Cass L.G."/>
            <person name="Horwitz A.H."/>
            <person name="Miyada C.G."/>
            <person name="Greenfield L."/>
            <person name="Wilcox G."/>
        </authorList>
    </citation>
    <scope>NUCLEOTIDE SEQUENCE [GENOMIC DNA] OF 1-61</scope>
    <source>
        <strain>B/R</strain>
    </source>
</reference>
<reference key="8">
    <citation type="journal article" date="1971" name="Proc. Natl. Acad. Sci. U.S.A.">
        <title>Purification of the araC protein.</title>
        <authorList>
            <person name="Wilcox G."/>
            <person name="Clemetson K.J."/>
            <person name="Santi D.V."/>
            <person name="Englesberg E."/>
        </authorList>
    </citation>
    <scope>PURIFICATION</scope>
    <scope>DNA-BINDING</scope>
</reference>
<reference key="9">
    <citation type="journal article" date="1974" name="Proc. Natl. Acad. Sci. U.S.A.">
        <title>In vitro activation of the transcription of araBAD operon by araC activator.</title>
        <authorList>
            <person name="Lee N."/>
            <person name="Wilcox G."/>
            <person name="Gielow W."/>
            <person name="Arnold J."/>
            <person name="Cleary P."/>
            <person name="Englesberg E."/>
        </authorList>
    </citation>
    <scope>FUNCTION</scope>
</reference>
<reference key="10">
    <citation type="journal article" date="1977" name="Cell">
        <title>The araC promoter: transcription, mapping and interaction with the araBAD promoter.</title>
        <authorList>
            <person name="Hirsh J."/>
            <person name="Schleif R."/>
        </authorList>
    </citation>
    <scope>FUNCTION</scope>
    <scope>INDUCTION</scope>
</reference>
<reference key="11">
    <citation type="journal article" date="1980" name="Proc. Natl. Acad. Sci. U.S.A.">
        <title>The Escherichia coli L-arabinose operon: binding sites of the regulatory proteins and a mechanism of positive and negative regulation.</title>
        <authorList>
            <person name="Ogden S."/>
            <person name="Haggerty D."/>
            <person name="Stoner C.M."/>
            <person name="Kolodrubetz D."/>
            <person name="Schleif R."/>
        </authorList>
    </citation>
    <scope>FUNCTION</scope>
    <scope>DNA-BINDING</scope>
</reference>
<reference key="12">
    <citation type="journal article" date="1983" name="J. Mol. Biol.">
        <title>The araE low affinity L-arabinose transport promoter. Cloning, sequence, transcription start site and DNA binding sites of regulatory proteins.</title>
        <authorList>
            <person name="Stoner C."/>
            <person name="Schleif R.F."/>
        </authorList>
    </citation>
    <scope>FUNCTION</scope>
</reference>
<reference key="13">
    <citation type="journal article" date="1984" name="Proc. Natl. Acad. Sci. U.S.A.">
        <title>Regulation of the araC gene of Escherichia coli: catabolite repression, autoregulation, and effect on araBAD expression.</title>
        <authorList>
            <person name="Miyada C.G."/>
            <person name="Stoltzfus L."/>
            <person name="Wilcox G."/>
        </authorList>
    </citation>
    <scope>INDUCTION</scope>
</reference>
<reference key="14">
    <citation type="journal article" date="1987" name="Proc. Natl. Acad. Sci. U.S.A.">
        <title>Arabinose-induced binding of AraC protein to araI2 activates the araBAD operon promoter.</title>
        <authorList>
            <person name="Lee N."/>
            <person name="Francklyn C."/>
            <person name="Hamilton E.P."/>
        </authorList>
    </citation>
    <scope>FUNCTION</scope>
    <scope>DNA-BINDING</scope>
    <scope>ACTIVITY REGULATION</scope>
</reference>
<reference key="15">
    <citation type="journal article" date="1988" name="Proc. Natl. Acad. Sci. U.S.A.">
        <title>Three binding sites for AraC protein are required for autoregulation of araC in Escherichia coli.</title>
        <authorList>
            <person name="Hamilton E.P."/>
            <person name="Lee N."/>
        </authorList>
    </citation>
    <scope>ACTIVITY REGULATION</scope>
    <scope>INDUCTION</scope>
</reference>
<reference key="16">
    <citation type="journal article" date="1989" name="J. Mol. Biol.">
        <title>Determining residue-base interactions between AraC protein and araI DNA.</title>
        <authorList>
            <person name="Brunelle A."/>
            <person name="Schleif R."/>
        </authorList>
    </citation>
    <scope>DNA-BINDING</scope>
    <scope>HTH MOTIFS</scope>
    <scope>MUTAGENESIS OF SER-209; HIS-213; ASP-257; GLN-258 AND SER-262</scope>
</reference>
<reference key="17">
    <citation type="journal article" date="1990" name="J. Mol. Biol.">
        <title>Characterization of the Escherichia coli araFGH and araJ promoters.</title>
        <authorList>
            <person name="Hendrickson W."/>
            <person name="Stoner C."/>
            <person name="Schleif R."/>
        </authorList>
    </citation>
    <scope>FUNCTION</scope>
</reference>
<reference key="18">
    <citation type="journal article" date="1992" name="J. Biol. Chem.">
        <title>AraC protein contacts asymmetric sites in the Escherichia coli araFGH promoter.</title>
        <authorList>
            <person name="Lu Y."/>
            <person name="Flaherty C."/>
            <person name="Hendrickson W."/>
        </authorList>
    </citation>
    <scope>FUNCTION</scope>
    <scope>DNA-BINDING</scope>
    <scope>SUBUNIT</scope>
</reference>
<reference key="19">
    <citation type="journal article" date="1997" name="Electrophoresis">
        <title>Escherichia coli proteome analysis using the gene-protein database.</title>
        <authorList>
            <person name="VanBogelen R.A."/>
            <person name="Abshire K.Z."/>
            <person name="Moldover B."/>
            <person name="Olson E.R."/>
            <person name="Neidhardt F.C."/>
        </authorList>
    </citation>
    <scope>IDENTIFICATION BY 2D-GEL</scope>
</reference>
<reference key="20">
    <citation type="journal article" date="2016" name="Proteins">
        <title>A genetic and physical study of the interdomain linker of E. Coli AraC protein--a trans-subunit communication pathway.</title>
        <authorList>
            <person name="Malaga F."/>
            <person name="Mayberry O."/>
            <person name="Park D.J."/>
            <person name="Rodgers M.E."/>
            <person name="Toptygin D."/>
            <person name="Schleif R.F."/>
        </authorList>
    </citation>
    <scope>DOMAIN</scope>
</reference>
<reference evidence="23" key="21">
    <citation type="journal article" date="1997" name="J. Mol. Biol.">
        <title>The 1.6 A crystal structure of the AraC sugar-binding and dimerization domain complexed with D-fucose.</title>
        <authorList>
            <person name="Soisson S.M."/>
            <person name="Macdougall-Shackleton B."/>
            <person name="Schleif R."/>
            <person name="Wolberger C."/>
        </authorList>
    </citation>
    <scope>X-RAY CRYSTALLOGRAPHY (1.6 ANGSTROMS) OF 1-178 IN COMPLEX WITH D-FUCOSE</scope>
    <scope>SUBUNIT</scope>
    <scope>DOMAIN</scope>
    <scope>ACTIVITY REGULATION</scope>
</reference>
<reference evidence="24 25" key="22">
    <citation type="journal article" date="1997" name="Science">
        <title>Structural basis for ligand-regulated oligomerization of AraC.</title>
        <authorList>
            <person name="Soisson S.M."/>
            <person name="Macdougall-Shackleton B."/>
            <person name="Schleif R."/>
            <person name="Wolberger C."/>
        </authorList>
    </citation>
    <scope>X-RAY CRYSTALLOGRAPHY (1.5 AND 2.8 ANGSTROMS) OF APOPROTEIN AND IN COMPLEX WITH ARABINOSE</scope>
    <scope>SUBUNIT</scope>
    <scope>DOMAIN</scope>
</reference>
<reference evidence="22" key="23">
    <citation type="journal article" date="2007" name="Proteins">
        <title>Structure and properties of a truely apo form of AraC dimerization domain.</title>
        <authorList>
            <person name="Weldon J.E."/>
            <person name="Rodgers M.E."/>
            <person name="Larkin C."/>
            <person name="Schleif R.F."/>
        </authorList>
    </citation>
    <scope>X-RAY CRYSTALLOGRAPHY (2.40 ANGSTROMS) OF 1-178 OF MUTANT VAL-31</scope>
    <scope>SUBUNIT</scope>
    <scope>MUTAGENESIS OF TYR-31</scope>
</reference>
<reference evidence="26" key="24">
    <citation type="journal article" date="2009" name="Proteins">
        <title>Solution structure of the DNA binding domain of AraC protein.</title>
        <authorList>
            <person name="Rodgers M.E."/>
            <person name="Schleif R."/>
        </authorList>
    </citation>
    <scope>STRUCTURE BY NMR OF 175-281</scope>
    <scope>DOMAIN</scope>
</reference>
<accession>P0A9E0</accession>
<accession>P03021</accession>
<accession>Q47056</accession>
<comment type="function">
    <text evidence="2 5 6 8 10 11 12 13 14">Transcription factor that regulates the expression of several genes involved in the transport and metabolism of L-arabinose (PubMed:1447222, PubMed:2231717, PubMed:2962192, PubMed:328165, PubMed:4362626, PubMed:6251457, PubMed:6319708). Functions both as a positive and a negative regulator (PubMed:328165, PubMed:6251457). In the presence of arabinose, activates the expression of the araBAD, araE, araFGH and araJ promoters (PubMed:1447222, PubMed:2231717, PubMed:2962192, PubMed:328165, PubMed:4362626, PubMed:6251457, PubMed:6319708). In the absence of arabinose, negatively regulates the araBAD operon (PubMed:6251457). Represses its own transcription (PubMed:328165). Acts by binding directly to DNA (PubMed:1447222, PubMed:2531226, PubMed:2962192, PubMed:4943786, PubMed:6251457).</text>
</comment>
<comment type="activity regulation">
    <text evidence="8 9 17">Arabinose converts the repressor form of AraC to the activator form to regulate the araBAD promoter (PubMed:2962192, PubMed:3279415). In the absence of arabinose, AraC binds to the araO2 and araI1 half-sites in the promoter region of the araBAD operon, leading to the formation of a DNA loop that blocks access of RNA polymerase to the promoter. In the presence of arabinose and the cyclic AMP receptor protein (CRP), it binds to the adjacent half-sites araI1 and araI2, leading to the binding of RNA polymerase to the promoter region and transcription of the araBAD operon (PubMed:2962192, PubMed:3279415). AraI1 acts as a switch mechanism allowing both the repressor and the activator forms of AraC protein to regulate the araBAD promoter (PubMed:2962192, PubMed:3279415). Inhibited by D-fucose, which binds competitively to the same site on the protein (PubMed:9367758).</text>
</comment>
<comment type="subunit">
    <text evidence="2 3 16 17">Homodimer.</text>
</comment>
<comment type="interaction">
    <interactant intactId="EBI-1113479">
        <id>P0A9E0</id>
    </interactant>
    <interactant intactId="EBI-1113479">
        <id>P0A9E0</id>
        <label>araC</label>
    </interactant>
    <organismsDiffer>false</organismsDiffer>
    <experiments>3</experiments>
</comment>
<comment type="interaction">
    <interactant intactId="EBI-1113479">
        <id>P0A9E0</id>
    </interactant>
    <interactant intactId="EBI-1133806">
        <id>P0A8P6</id>
        <label>xerC</label>
    </interactant>
    <organismsDiffer>false</organismsDiffer>
    <experiments>3</experiments>
</comment>
<comment type="subcellular location">
    <subcellularLocation>
        <location evidence="19">Cytoplasm</location>
    </subcellularLocation>
</comment>
<comment type="induction">
    <text evidence="9 10 15">Negatively autoregulated (PubMed:3279415, PubMed:328165, PubMed:6377308). Autoregulation is either greatly reduced or nonexistent immediately after the addition of L-arabinose (PubMed:6377308). Transcription is stimulated by CRP in the presence of cAMP (PubMed:328165, PubMed:6377308).</text>
</comment>
<comment type="domain">
    <text evidence="4 7 16 17">Contains an N-terminal domain that binds arabinose and mediates dimerization, an inter-domain linker region, and a C-terminal domain that binds DNA (PubMed:26800223, PubMed:9103202, PubMed:9367758). Arabinose is bound within a beta barrel and is completely buried by the N-terminal arm of the protein (PubMed:9103202). The DNA-binding domain contains seven helices arranged in two semi-independent subdomains, each containing one helix-turn-helix DNA binding motif, joined by a 19 residue central helix (PubMed:19422057).</text>
</comment>
<name>ARAC_ECOLI</name>
<proteinExistence type="evidence at protein level"/>
<evidence type="ECO:0000255" key="1">
    <source>
        <dbReference type="PROSITE-ProRule" id="PRU00593"/>
    </source>
</evidence>
<evidence type="ECO:0000269" key="2">
    <source>
    </source>
</evidence>
<evidence type="ECO:0000269" key="3">
    <source>
    </source>
</evidence>
<evidence type="ECO:0000269" key="4">
    <source>
    </source>
</evidence>
<evidence type="ECO:0000269" key="5">
    <source>
    </source>
</evidence>
<evidence type="ECO:0000269" key="6">
    <source>
    </source>
</evidence>
<evidence type="ECO:0000269" key="7">
    <source>
    </source>
</evidence>
<evidence type="ECO:0000269" key="8">
    <source>
    </source>
</evidence>
<evidence type="ECO:0000269" key="9">
    <source>
    </source>
</evidence>
<evidence type="ECO:0000269" key="10">
    <source>
    </source>
</evidence>
<evidence type="ECO:0000269" key="11">
    <source>
    </source>
</evidence>
<evidence type="ECO:0000269" key="12">
    <source>
    </source>
</evidence>
<evidence type="ECO:0000269" key="13">
    <source>
    </source>
</evidence>
<evidence type="ECO:0000269" key="14">
    <source>
    </source>
</evidence>
<evidence type="ECO:0000269" key="15">
    <source>
    </source>
</evidence>
<evidence type="ECO:0000269" key="16">
    <source>
    </source>
</evidence>
<evidence type="ECO:0000269" key="17">
    <source>
    </source>
</evidence>
<evidence type="ECO:0000303" key="18">
    <source>
    </source>
</evidence>
<evidence type="ECO:0000305" key="19"/>
<evidence type="ECO:0000305" key="20">
    <source>
    </source>
</evidence>
<evidence type="ECO:0000305" key="21">
    <source>
    </source>
</evidence>
<evidence type="ECO:0007744" key="22">
    <source>
        <dbReference type="PDB" id="1XJA"/>
    </source>
</evidence>
<evidence type="ECO:0007744" key="23">
    <source>
        <dbReference type="PDB" id="2AAC"/>
    </source>
</evidence>
<evidence type="ECO:0007744" key="24">
    <source>
        <dbReference type="PDB" id="2ARA"/>
    </source>
</evidence>
<evidence type="ECO:0007744" key="25">
    <source>
        <dbReference type="PDB" id="2ARC"/>
    </source>
</evidence>
<evidence type="ECO:0007744" key="26">
    <source>
        <dbReference type="PDB" id="2K9S"/>
    </source>
</evidence>
<evidence type="ECO:0007829" key="27">
    <source>
        <dbReference type="PDB" id="1XJA"/>
    </source>
</evidence>
<evidence type="ECO:0007829" key="28">
    <source>
        <dbReference type="PDB" id="2ARC"/>
    </source>
</evidence>
<evidence type="ECO:0007829" key="29">
    <source>
        <dbReference type="PDB" id="2K9S"/>
    </source>
</evidence>
<feature type="chain" id="PRO_0000194499" description="Arabinose operon regulatory protein">
    <location>
        <begin position="1"/>
        <end position="292"/>
    </location>
</feature>
<feature type="domain" description="HTH araC/xylS-type" evidence="1">
    <location>
        <begin position="180"/>
        <end position="279"/>
    </location>
</feature>
<feature type="DNA-binding region" description="H-T-H motif" evidence="1 20">
    <location>
        <begin position="198"/>
        <end position="219"/>
    </location>
</feature>
<feature type="DNA-binding region" description="H-T-H motif" evidence="1 20">
    <location>
        <begin position="246"/>
        <end position="269"/>
    </location>
</feature>
<feature type="binding site" evidence="16 21 25">
    <location>
        <position position="8"/>
    </location>
    <ligand>
        <name>alpha-L-arabinopyanose</name>
        <dbReference type="ChEBI" id="CHEBI:46987"/>
    </ligand>
</feature>
<feature type="binding site" evidence="16 21 25">
    <location>
        <position position="24"/>
    </location>
    <ligand>
        <name>alpha-L-arabinopyanose</name>
        <dbReference type="ChEBI" id="CHEBI:46987"/>
    </ligand>
</feature>
<feature type="binding site" evidence="16 21 25">
    <location>
        <position position="38"/>
    </location>
    <ligand>
        <name>alpha-L-arabinopyanose</name>
        <dbReference type="ChEBI" id="CHEBI:46987"/>
    </ligand>
</feature>
<feature type="binding site" evidence="16 21 25">
    <location>
        <position position="82"/>
    </location>
    <ligand>
        <name>alpha-L-arabinopyanose</name>
        <dbReference type="ChEBI" id="CHEBI:46987"/>
    </ligand>
</feature>
<feature type="binding site" evidence="16 21 25">
    <location>
        <position position="93"/>
    </location>
    <ligand>
        <name>alpha-L-arabinopyanose</name>
        <dbReference type="ChEBI" id="CHEBI:46987"/>
    </ligand>
</feature>
<feature type="mutagenesis site" description="Eliminates the self-association, but does not affect regulation properties of the protein." evidence="3">
    <original>Y</original>
    <variation>V</variation>
    <location>
        <position position="31"/>
    </location>
</feature>
<feature type="mutagenesis site" description="Defective in DNA binding." evidence="6">
    <original>S</original>
    <variation>A</variation>
    <location>
        <position position="209"/>
    </location>
</feature>
<feature type="mutagenesis site" description="Defective in DNA binding." evidence="6">
    <original>H</original>
    <variation>A</variation>
    <variation>Y</variation>
    <location>
        <position position="213"/>
    </location>
</feature>
<feature type="mutagenesis site" description="Does not bind DNA." evidence="6">
    <original>D</original>
    <variation>A</variation>
    <location>
        <position position="257"/>
    </location>
</feature>
<feature type="mutagenesis site" description="Defective in DNA binding." evidence="6">
    <original>Q</original>
    <variation>A</variation>
    <location>
        <position position="258"/>
    </location>
</feature>
<feature type="mutagenesis site" description="Does not affect DNA binding." evidence="6">
    <original>S</original>
    <variation>A</variation>
    <location>
        <position position="262"/>
    </location>
</feature>
<feature type="sequence conflict" description="In Ref. 7; AAA23468." evidence="19" ref="7">
    <original>D</original>
    <variation>E</variation>
    <location>
        <position position="7"/>
    </location>
</feature>
<feature type="turn" evidence="27">
    <location>
        <begin position="11"/>
        <end position="13"/>
    </location>
</feature>
<feature type="strand" evidence="28">
    <location>
        <begin position="16"/>
        <end position="18"/>
    </location>
</feature>
<feature type="strand" evidence="28">
    <location>
        <begin position="20"/>
        <end position="27"/>
    </location>
</feature>
<feature type="strand" evidence="28">
    <location>
        <begin position="36"/>
        <end position="38"/>
    </location>
</feature>
<feature type="strand" evidence="28">
    <location>
        <begin position="43"/>
        <end position="53"/>
    </location>
</feature>
<feature type="strand" evidence="28">
    <location>
        <begin position="55"/>
        <end position="59"/>
    </location>
</feature>
<feature type="strand" evidence="28">
    <location>
        <begin position="62"/>
        <end position="66"/>
    </location>
</feature>
<feature type="strand" evidence="28">
    <location>
        <begin position="71"/>
        <end position="74"/>
    </location>
</feature>
<feature type="strand" evidence="28">
    <location>
        <begin position="80"/>
        <end position="84"/>
    </location>
</feature>
<feature type="strand" evidence="28">
    <location>
        <begin position="88"/>
        <end position="98"/>
    </location>
</feature>
<feature type="helix" evidence="28">
    <location>
        <begin position="102"/>
        <end position="107"/>
    </location>
</feature>
<feature type="strand" evidence="28">
    <location>
        <begin position="112"/>
        <end position="114"/>
    </location>
</feature>
<feature type="strand" evidence="28">
    <location>
        <begin position="117"/>
        <end position="120"/>
    </location>
</feature>
<feature type="turn" evidence="28">
    <location>
        <begin position="124"/>
        <end position="126"/>
    </location>
</feature>
<feature type="helix" evidence="28">
    <location>
        <begin position="127"/>
        <end position="142"/>
    </location>
</feature>
<feature type="strand" evidence="28">
    <location>
        <begin position="145"/>
        <end position="147"/>
    </location>
</feature>
<feature type="helix" evidence="28">
    <location>
        <begin position="148"/>
        <end position="166"/>
    </location>
</feature>
<feature type="helix" evidence="29">
    <location>
        <begin position="177"/>
        <end position="188"/>
    </location>
</feature>
<feature type="helix" evidence="29">
    <location>
        <begin position="197"/>
        <end position="203"/>
    </location>
</feature>
<feature type="helix" evidence="29">
    <location>
        <begin position="208"/>
        <end position="219"/>
    </location>
</feature>
<feature type="helix" evidence="29">
    <location>
        <begin position="223"/>
        <end position="241"/>
    </location>
</feature>
<feature type="helix" evidence="29">
    <location>
        <begin position="246"/>
        <end position="252"/>
    </location>
</feature>
<feature type="helix" evidence="29">
    <location>
        <begin position="258"/>
        <end position="269"/>
    </location>
</feature>
<feature type="helix" evidence="29">
    <location>
        <begin position="273"/>
        <end position="278"/>
    </location>
</feature>
<dbReference type="EMBL" id="V00256">
    <property type="protein sequence ID" value="CAA23507.1"/>
    <property type="molecule type" value="Genomic_DNA"/>
</dbReference>
<dbReference type="EMBL" id="V00259">
    <property type="protein sequence ID" value="CAA23508.1"/>
    <property type="molecule type" value="Genomic_DNA"/>
</dbReference>
<dbReference type="EMBL" id="J01641">
    <property type="protein sequence ID" value="AAA23466.1"/>
    <property type="molecule type" value="Genomic_DNA"/>
</dbReference>
<dbReference type="EMBL" id="U00096">
    <property type="protein sequence ID" value="AAC73175.1"/>
    <property type="molecule type" value="Genomic_DNA"/>
</dbReference>
<dbReference type="EMBL" id="AP009048">
    <property type="protein sequence ID" value="BAB96633.1"/>
    <property type="molecule type" value="Genomic_DNA"/>
</dbReference>
<dbReference type="EMBL" id="K01303">
    <property type="protein sequence ID" value="AAA23468.1"/>
    <property type="molecule type" value="Genomic_DNA"/>
</dbReference>
<dbReference type="PIR" id="A91473">
    <property type="entry name" value="RGECA"/>
</dbReference>
<dbReference type="RefSeq" id="NP_414606.1">
    <property type="nucleotide sequence ID" value="NC_000913.3"/>
</dbReference>
<dbReference type="RefSeq" id="WP_001300811.1">
    <property type="nucleotide sequence ID" value="NZ_STEB01000010.1"/>
</dbReference>
<dbReference type="PDB" id="1XJA">
    <property type="method" value="X-ray"/>
    <property type="resolution" value="2.40 A"/>
    <property type="chains" value="A/B/C/D/E=1-178"/>
</dbReference>
<dbReference type="PDB" id="2AAC">
    <property type="method" value="X-ray"/>
    <property type="resolution" value="1.60 A"/>
    <property type="chains" value="A/B=2-178"/>
</dbReference>
<dbReference type="PDB" id="2ARA">
    <property type="method" value="X-ray"/>
    <property type="resolution" value="2.80 A"/>
    <property type="chains" value="A=19-167"/>
</dbReference>
<dbReference type="PDB" id="2ARC">
    <property type="method" value="X-ray"/>
    <property type="resolution" value="1.50 A"/>
    <property type="chains" value="A/B=7-170"/>
</dbReference>
<dbReference type="PDB" id="2K9S">
    <property type="method" value="NMR"/>
    <property type="chains" value="A=175-281"/>
</dbReference>
<dbReference type="PDBsum" id="1XJA"/>
<dbReference type="PDBsum" id="2AAC"/>
<dbReference type="PDBsum" id="2ARA"/>
<dbReference type="PDBsum" id="2ARC"/>
<dbReference type="PDBsum" id="2K9S"/>
<dbReference type="BMRB" id="P0A9E0"/>
<dbReference type="SMR" id="P0A9E0"/>
<dbReference type="BioGRID" id="4260828">
    <property type="interactions" value="278"/>
</dbReference>
<dbReference type="BioGRID" id="849182">
    <property type="interactions" value="11"/>
</dbReference>
<dbReference type="DIP" id="DIP-9125N"/>
<dbReference type="FunCoup" id="P0A9E0">
    <property type="interactions" value="164"/>
</dbReference>
<dbReference type="IntAct" id="P0A9E0">
    <property type="interactions" value="12"/>
</dbReference>
<dbReference type="STRING" id="511145.b0064"/>
<dbReference type="DrugBank" id="DB03142">
    <property type="generic name" value="Alpha-L-Arabinose"/>
</dbReference>
<dbReference type="DrugBank" id="DB04062">
    <property type="generic name" value="beta-D-fucose"/>
</dbReference>
<dbReference type="PaxDb" id="511145-b0064"/>
<dbReference type="EnsemblBacteria" id="AAC73175">
    <property type="protein sequence ID" value="AAC73175"/>
    <property type="gene ID" value="b0064"/>
</dbReference>
<dbReference type="GeneID" id="75202120"/>
<dbReference type="GeneID" id="944780"/>
<dbReference type="KEGG" id="ecj:JW0063"/>
<dbReference type="KEGG" id="eco:b0064"/>
<dbReference type="PATRIC" id="fig|511145.12.peg.66"/>
<dbReference type="EchoBASE" id="EB0052"/>
<dbReference type="eggNOG" id="COG4977">
    <property type="taxonomic scope" value="Bacteria"/>
</dbReference>
<dbReference type="HOGENOM" id="CLU_000445_88_6_6"/>
<dbReference type="InParanoid" id="P0A9E0"/>
<dbReference type="OMA" id="GFEDQLY"/>
<dbReference type="OrthoDB" id="9803764at2"/>
<dbReference type="PhylomeDB" id="P0A9E0"/>
<dbReference type="BioCyc" id="EcoCyc:PD00242"/>
<dbReference type="EvolutionaryTrace" id="P0A9E0"/>
<dbReference type="PRO" id="PR:P0A9E0"/>
<dbReference type="Proteomes" id="UP000000625">
    <property type="component" value="Chromosome"/>
</dbReference>
<dbReference type="CollecTF" id="EXPREG_000007d0"/>
<dbReference type="GO" id="GO:0005829">
    <property type="term" value="C:cytosol"/>
    <property type="evidence" value="ECO:0000314"/>
    <property type="project" value="EcoCyc"/>
</dbReference>
<dbReference type="GO" id="GO:0032993">
    <property type="term" value="C:protein-DNA complex"/>
    <property type="evidence" value="ECO:0000315"/>
    <property type="project" value="CollecTF"/>
</dbReference>
<dbReference type="GO" id="GO:0001217">
    <property type="term" value="F:DNA-binding transcription repressor activity"/>
    <property type="evidence" value="ECO:0000315"/>
    <property type="project" value="CollecTF"/>
</dbReference>
<dbReference type="GO" id="GO:0042802">
    <property type="term" value="F:identical protein binding"/>
    <property type="evidence" value="ECO:0000353"/>
    <property type="project" value="IntAct"/>
</dbReference>
<dbReference type="GO" id="GO:0000976">
    <property type="term" value="F:transcription cis-regulatory region binding"/>
    <property type="evidence" value="ECO:0000315"/>
    <property type="project" value="CollecTF"/>
</dbReference>
<dbReference type="GO" id="GO:0019568">
    <property type="term" value="P:arabinose catabolic process"/>
    <property type="evidence" value="ECO:0000315"/>
    <property type="project" value="EcoliWiki"/>
</dbReference>
<dbReference type="CDD" id="cd06986">
    <property type="entry name" value="cupin_MmsR-like_N"/>
    <property type="match status" value="1"/>
</dbReference>
<dbReference type="FunFam" id="2.60.120.280:FF:000001">
    <property type="entry name" value="Arabinose operon regulatory protein"/>
    <property type="match status" value="1"/>
</dbReference>
<dbReference type="FunFam" id="1.10.10.60:FF:000163">
    <property type="entry name" value="Arabinose operon transcriptional regulator"/>
    <property type="match status" value="1"/>
</dbReference>
<dbReference type="Gene3D" id="1.10.10.60">
    <property type="entry name" value="Homeodomain-like"/>
    <property type="match status" value="2"/>
</dbReference>
<dbReference type="Gene3D" id="2.60.120.280">
    <property type="entry name" value="Regulatory protein AraC"/>
    <property type="match status" value="1"/>
</dbReference>
<dbReference type="InterPro" id="IPR003313">
    <property type="entry name" value="AraC-bd"/>
</dbReference>
<dbReference type="InterPro" id="IPR009057">
    <property type="entry name" value="Homeodomain-like_sf"/>
</dbReference>
<dbReference type="InterPro" id="IPR037923">
    <property type="entry name" value="HTH-like"/>
</dbReference>
<dbReference type="InterPro" id="IPR018060">
    <property type="entry name" value="HTH_AraC"/>
</dbReference>
<dbReference type="InterPro" id="IPR018062">
    <property type="entry name" value="HTH_AraC-typ_CS"/>
</dbReference>
<dbReference type="InterPro" id="IPR020449">
    <property type="entry name" value="Tscrpt_reg_AraC-type_HTH"/>
</dbReference>
<dbReference type="NCBIfam" id="NF007860">
    <property type="entry name" value="PRK10572.1"/>
    <property type="match status" value="1"/>
</dbReference>
<dbReference type="PANTHER" id="PTHR43280:SF25">
    <property type="entry name" value="ARABINOSE OPERON REGULATORY PROTEIN"/>
    <property type="match status" value="1"/>
</dbReference>
<dbReference type="PANTHER" id="PTHR43280">
    <property type="entry name" value="ARAC-FAMILY TRANSCRIPTIONAL REGULATOR"/>
    <property type="match status" value="1"/>
</dbReference>
<dbReference type="Pfam" id="PF02311">
    <property type="entry name" value="AraC_binding"/>
    <property type="match status" value="1"/>
</dbReference>
<dbReference type="Pfam" id="PF12833">
    <property type="entry name" value="HTH_18"/>
    <property type="match status" value="1"/>
</dbReference>
<dbReference type="PRINTS" id="PR00032">
    <property type="entry name" value="HTHARAC"/>
</dbReference>
<dbReference type="SMART" id="SM00342">
    <property type="entry name" value="HTH_ARAC"/>
    <property type="match status" value="1"/>
</dbReference>
<dbReference type="SUPFAM" id="SSF46689">
    <property type="entry name" value="Homeodomain-like"/>
    <property type="match status" value="2"/>
</dbReference>
<dbReference type="SUPFAM" id="SSF51215">
    <property type="entry name" value="Regulatory protein AraC"/>
    <property type="match status" value="1"/>
</dbReference>
<dbReference type="PROSITE" id="PS00041">
    <property type="entry name" value="HTH_ARAC_FAMILY_1"/>
    <property type="match status" value="1"/>
</dbReference>
<dbReference type="PROSITE" id="PS01124">
    <property type="entry name" value="HTH_ARAC_FAMILY_2"/>
    <property type="match status" value="1"/>
</dbReference>
<organism>
    <name type="scientific">Escherichia coli (strain K12)</name>
    <dbReference type="NCBI Taxonomy" id="83333"/>
    <lineage>
        <taxon>Bacteria</taxon>
        <taxon>Pseudomonadati</taxon>
        <taxon>Pseudomonadota</taxon>
        <taxon>Gammaproteobacteria</taxon>
        <taxon>Enterobacterales</taxon>
        <taxon>Enterobacteriaceae</taxon>
        <taxon>Escherichia</taxon>
    </lineage>
</organism>
<protein>
    <recommendedName>
        <fullName evidence="19">Arabinose operon regulatory protein</fullName>
    </recommendedName>
    <alternativeName>
        <fullName evidence="19">HTH-type transcriptional regulator AraC</fullName>
    </alternativeName>
</protein>
<sequence length="292" mass="33384">MAEAQNDPLLPGYSFNAHLVAGLTPIEANGYLDFFIDRPLGMKGYILNLTIRGQGVVKNQGREFVCRPGDILLFPPGEIHHYGRHPEAREWYHQWVYFRPRAYWHEWLNWPSIFANTGFFRPDEAHQPHFSDLFGQIINAGQGEGRYSELLAINLLEQLLLRRMEAINESLHPPMDNRVREACQYISDHLADSNFDIASVAQHVCLSPSRLSHLFRQQLGISVLSWREDQRISQAKLLLSTTRMPIATVGRNVGFDDQLYFSRVFKKCTGASPSEFRAGCEEKVNDVAVKLS</sequence>
<keyword id="KW-0002">3D-structure</keyword>
<keyword id="KW-0010">Activator</keyword>
<keyword id="KW-0054">Arabinose catabolism</keyword>
<keyword id="KW-0119">Carbohydrate metabolism</keyword>
<keyword id="KW-0963">Cytoplasm</keyword>
<keyword id="KW-0238">DNA-binding</keyword>
<keyword id="KW-1185">Reference proteome</keyword>
<keyword id="KW-0678">Repressor</keyword>
<keyword id="KW-0804">Transcription</keyword>
<keyword id="KW-0805">Transcription regulation</keyword>